<proteinExistence type="inferred from homology"/>
<evidence type="ECO:0000250" key="1">
    <source>
        <dbReference type="UniProtKB" id="P0AFL9"/>
    </source>
</evidence>
<evidence type="ECO:0000255" key="2"/>
<evidence type="ECO:0000305" key="3"/>
<comment type="function">
    <text evidence="1">Component of a transport pathway that contributes to membrane integrity.</text>
</comment>
<comment type="subunit">
    <text evidence="1">May form a complex composed of PqiA, PqiB and PqiC.</text>
</comment>
<comment type="subcellular location">
    <subcellularLocation>
        <location evidence="1">Cell inner membrane</location>
        <topology evidence="1">Multi-pass membrane protein</topology>
    </subcellularLocation>
</comment>
<comment type="similarity">
    <text evidence="3">Belongs to the PqiA family.</text>
</comment>
<dbReference type="EMBL" id="AE014075">
    <property type="protein sequence ID" value="AAN79554.1"/>
    <property type="molecule type" value="Genomic_DNA"/>
</dbReference>
<dbReference type="RefSeq" id="WP_000333176.1">
    <property type="nucleotide sequence ID" value="NZ_CP051263.1"/>
</dbReference>
<dbReference type="STRING" id="199310.c1086"/>
<dbReference type="GeneID" id="93776464"/>
<dbReference type="KEGG" id="ecc:c1086"/>
<dbReference type="eggNOG" id="COG2995">
    <property type="taxonomic scope" value="Bacteria"/>
</dbReference>
<dbReference type="HOGENOM" id="CLU_041903_0_1_6"/>
<dbReference type="BioCyc" id="ECOL199310:C1086-MONOMER"/>
<dbReference type="Proteomes" id="UP000001410">
    <property type="component" value="Chromosome"/>
</dbReference>
<dbReference type="GO" id="GO:0005886">
    <property type="term" value="C:plasma membrane"/>
    <property type="evidence" value="ECO:0007669"/>
    <property type="project" value="UniProtKB-SubCell"/>
</dbReference>
<dbReference type="InterPro" id="IPR007498">
    <property type="entry name" value="PqiA-like"/>
</dbReference>
<dbReference type="InterPro" id="IPR005219">
    <property type="entry name" value="PqiA-like_proteobact"/>
</dbReference>
<dbReference type="InterPro" id="IPR051800">
    <property type="entry name" value="PqiA-PqiB_transport"/>
</dbReference>
<dbReference type="NCBIfam" id="TIGR00155">
    <property type="entry name" value="pqiA_fam"/>
    <property type="match status" value="1"/>
</dbReference>
<dbReference type="NCBIfam" id="NF011683">
    <property type="entry name" value="PRK15103.1"/>
    <property type="match status" value="1"/>
</dbReference>
<dbReference type="PANTHER" id="PTHR30462:SF3">
    <property type="entry name" value="INTERMEMBRANE TRANSPORT PROTEIN PQIA"/>
    <property type="match status" value="1"/>
</dbReference>
<dbReference type="PANTHER" id="PTHR30462">
    <property type="entry name" value="INTERMEMBRANE TRANSPORT PROTEIN PQIB-RELATED"/>
    <property type="match status" value="1"/>
</dbReference>
<dbReference type="Pfam" id="PF04403">
    <property type="entry name" value="PqiA"/>
    <property type="match status" value="2"/>
</dbReference>
<sequence length="417" mass="46463">MCEHHHAAKHILCSQCDMLVALPRLEHGQKAACPRCGTTLTVAWDAPRQRPTAYALAALFMLLLSNLFPFVNMNVAGVTSEITLLEIPGVLFSEDYASLGTFFLLFVQLVPAFCLITILLLVNRAELPVRLKEQLARVLFQLKTWGMAEIFLAGVLVSFVKLMAYGSIGVGSSFLPWCLFCVLQLRAFQCVDRRWLWDDIAPMPELRQPLKPGVTGIRQGLRSCSCCTAILPADEPVCPRCSTKGYVRRRNSLQWTLALLVTSIMLYLPANILPIMVTDLLGSKMPSTILAGVILLWSEGSYPVAAVIFLASIMVPTLKMIAIAWLCWDAKGHGKRDSERMHLIYEVVEFVGRWSMIDVFVIAVLSALVRMGGLMSIYPAMGALMFALVVIMTMFSAMTFDPRLSWDRQPESEHEES</sequence>
<gene>
    <name type="primary">pqiA</name>
    <name type="ordered locus">c1086</name>
</gene>
<keyword id="KW-0997">Cell inner membrane</keyword>
<keyword id="KW-1003">Cell membrane</keyword>
<keyword id="KW-0472">Membrane</keyword>
<keyword id="KW-1185">Reference proteome</keyword>
<keyword id="KW-0812">Transmembrane</keyword>
<keyword id="KW-1133">Transmembrane helix</keyword>
<keyword id="KW-0813">Transport</keyword>
<feature type="chain" id="PRO_0000058555" description="Intermembrane transport protein PqiA">
    <location>
        <begin position="1"/>
        <end position="417"/>
    </location>
</feature>
<feature type="topological domain" description="Cytoplasmic" evidence="1">
    <location>
        <begin position="1"/>
        <end position="50"/>
    </location>
</feature>
<feature type="transmembrane region" description="Helical" evidence="2">
    <location>
        <begin position="51"/>
        <end position="71"/>
    </location>
</feature>
<feature type="topological domain" description="Periplasmic" evidence="1">
    <location>
        <begin position="72"/>
        <end position="101"/>
    </location>
</feature>
<feature type="transmembrane region" description="Helical" evidence="2">
    <location>
        <begin position="102"/>
        <end position="122"/>
    </location>
</feature>
<feature type="topological domain" description="Cytoplasmic" evidence="1">
    <location>
        <begin position="123"/>
        <end position="256"/>
    </location>
</feature>
<feature type="transmembrane region" description="Helical" evidence="2">
    <location>
        <begin position="257"/>
        <end position="277"/>
    </location>
</feature>
<feature type="topological domain" description="Periplasmic" evidence="1">
    <location>
        <begin position="278"/>
        <end position="284"/>
    </location>
</feature>
<feature type="transmembrane region" description="Helical" evidence="2">
    <location>
        <begin position="285"/>
        <end position="305"/>
    </location>
</feature>
<feature type="topological domain" description="Cytoplasmic" evidence="1">
    <location>
        <begin position="306"/>
        <end position="346"/>
    </location>
</feature>
<feature type="transmembrane region" description="Helical" evidence="2">
    <location>
        <begin position="347"/>
        <end position="367"/>
    </location>
</feature>
<feature type="topological domain" description="Periplasmic" evidence="1">
    <location>
        <begin position="368"/>
        <end position="371"/>
    </location>
</feature>
<feature type="transmembrane region" description="Helical" evidence="2">
    <location>
        <begin position="372"/>
        <end position="392"/>
    </location>
</feature>
<feature type="topological domain" description="Cytoplasmic" evidence="1">
    <location>
        <begin position="393"/>
        <end position="417"/>
    </location>
</feature>
<organism>
    <name type="scientific">Escherichia coli O6:H1 (strain CFT073 / ATCC 700928 / UPEC)</name>
    <dbReference type="NCBI Taxonomy" id="199310"/>
    <lineage>
        <taxon>Bacteria</taxon>
        <taxon>Pseudomonadati</taxon>
        <taxon>Pseudomonadota</taxon>
        <taxon>Gammaproteobacteria</taxon>
        <taxon>Enterobacterales</taxon>
        <taxon>Enterobacteriaceae</taxon>
        <taxon>Escherichia</taxon>
    </lineage>
</organism>
<accession>P0AFM0</accession>
<accession>P43670</accession>
<accession>P77566</accession>
<name>PQIA_ECOL6</name>
<protein>
    <recommendedName>
        <fullName evidence="1">Intermembrane transport protein PqiA</fullName>
    </recommendedName>
</protein>
<reference key="1">
    <citation type="journal article" date="2002" name="Proc. Natl. Acad. Sci. U.S.A.">
        <title>Extensive mosaic structure revealed by the complete genome sequence of uropathogenic Escherichia coli.</title>
        <authorList>
            <person name="Welch R.A."/>
            <person name="Burland V."/>
            <person name="Plunkett G. III"/>
            <person name="Redford P."/>
            <person name="Roesch P."/>
            <person name="Rasko D."/>
            <person name="Buckles E.L."/>
            <person name="Liou S.-R."/>
            <person name="Boutin A."/>
            <person name="Hackett J."/>
            <person name="Stroud D."/>
            <person name="Mayhew G.F."/>
            <person name="Rose D.J."/>
            <person name="Zhou S."/>
            <person name="Schwartz D.C."/>
            <person name="Perna N.T."/>
            <person name="Mobley H.L.T."/>
            <person name="Donnenberg M.S."/>
            <person name="Blattner F.R."/>
        </authorList>
    </citation>
    <scope>NUCLEOTIDE SEQUENCE [LARGE SCALE GENOMIC DNA]</scope>
    <source>
        <strain>CFT073 / ATCC 700928 / UPEC</strain>
    </source>
</reference>